<accession>P61500</accession>
<accession>P48297</accession>
<accession>Q9AGJ9</accession>
<sequence>MDESKRKALENALKAIEKEFGKGAVMRLGEMPKQQVDVIPTGSLALDLALGIGGIPRGRIVEIYGPESGGKTTLALTIIAQAQRRGGVAAFVDAEHALDPLYAQRLGVQVEDLLVSQPDTGEQALEIVELLARSGAVDVIVVDSVAALVPRAEIEGEMGDQHVGLQARLMSQALRKLTAVLAKSNTAAIFINQVREKVGVTYGNPETTPGGRALKFYASVRLDVRKSGQPIKVGNEAVGVKVRVKVVKNKLAPPFREAELEIYFGRGLDPVADLVNVAVAAGVIEKAGSWFSYGELRLGQGKEKAAEALRERPELLEEIRTKVLERAGEVVLAAGEDEGE</sequence>
<dbReference type="EMBL" id="AF331800">
    <property type="protein sequence ID" value="AAK15321.1"/>
    <property type="molecule type" value="Genomic_DNA"/>
</dbReference>
<dbReference type="EMBL" id="AE017221">
    <property type="protein sequence ID" value="AAS81808.1"/>
    <property type="molecule type" value="Genomic_DNA"/>
</dbReference>
<dbReference type="RefSeq" id="WP_011173842.1">
    <property type="nucleotide sequence ID" value="NC_005835.1"/>
</dbReference>
<dbReference type="SMR" id="P61500"/>
<dbReference type="KEGG" id="tth:TT_C1466"/>
<dbReference type="eggNOG" id="COG0468">
    <property type="taxonomic scope" value="Bacteria"/>
</dbReference>
<dbReference type="HOGENOM" id="CLU_040469_3_2_0"/>
<dbReference type="OrthoDB" id="9776733at2"/>
<dbReference type="Proteomes" id="UP000000592">
    <property type="component" value="Chromosome"/>
</dbReference>
<dbReference type="GO" id="GO:0005829">
    <property type="term" value="C:cytosol"/>
    <property type="evidence" value="ECO:0007669"/>
    <property type="project" value="TreeGrafter"/>
</dbReference>
<dbReference type="GO" id="GO:0005524">
    <property type="term" value="F:ATP binding"/>
    <property type="evidence" value="ECO:0007669"/>
    <property type="project" value="UniProtKB-UniRule"/>
</dbReference>
<dbReference type="GO" id="GO:0016887">
    <property type="term" value="F:ATP hydrolysis activity"/>
    <property type="evidence" value="ECO:0007669"/>
    <property type="project" value="InterPro"/>
</dbReference>
<dbReference type="GO" id="GO:0140664">
    <property type="term" value="F:ATP-dependent DNA damage sensor activity"/>
    <property type="evidence" value="ECO:0007669"/>
    <property type="project" value="InterPro"/>
</dbReference>
<dbReference type="GO" id="GO:0003684">
    <property type="term" value="F:damaged DNA binding"/>
    <property type="evidence" value="ECO:0007669"/>
    <property type="project" value="UniProtKB-UniRule"/>
</dbReference>
<dbReference type="GO" id="GO:0003697">
    <property type="term" value="F:single-stranded DNA binding"/>
    <property type="evidence" value="ECO:0007669"/>
    <property type="project" value="UniProtKB-UniRule"/>
</dbReference>
<dbReference type="GO" id="GO:0006310">
    <property type="term" value="P:DNA recombination"/>
    <property type="evidence" value="ECO:0007669"/>
    <property type="project" value="UniProtKB-UniRule"/>
</dbReference>
<dbReference type="GO" id="GO:0006281">
    <property type="term" value="P:DNA repair"/>
    <property type="evidence" value="ECO:0007669"/>
    <property type="project" value="UniProtKB-UniRule"/>
</dbReference>
<dbReference type="GO" id="GO:0009432">
    <property type="term" value="P:SOS response"/>
    <property type="evidence" value="ECO:0007669"/>
    <property type="project" value="UniProtKB-UniRule"/>
</dbReference>
<dbReference type="CDD" id="cd00983">
    <property type="entry name" value="RecA"/>
    <property type="match status" value="1"/>
</dbReference>
<dbReference type="FunFam" id="3.40.50.300:FF:000087">
    <property type="entry name" value="Recombinase RecA"/>
    <property type="match status" value="1"/>
</dbReference>
<dbReference type="Gene3D" id="3.40.50.300">
    <property type="entry name" value="P-loop containing nucleotide triphosphate hydrolases"/>
    <property type="match status" value="1"/>
</dbReference>
<dbReference type="HAMAP" id="MF_00268">
    <property type="entry name" value="RecA"/>
    <property type="match status" value="1"/>
</dbReference>
<dbReference type="InterPro" id="IPR003593">
    <property type="entry name" value="AAA+_ATPase"/>
</dbReference>
<dbReference type="InterPro" id="IPR013765">
    <property type="entry name" value="DNA_recomb/repair_RecA"/>
</dbReference>
<dbReference type="InterPro" id="IPR020584">
    <property type="entry name" value="DNA_recomb/repair_RecA_CS"/>
</dbReference>
<dbReference type="InterPro" id="IPR027417">
    <property type="entry name" value="P-loop_NTPase"/>
</dbReference>
<dbReference type="InterPro" id="IPR049261">
    <property type="entry name" value="RecA-like_C"/>
</dbReference>
<dbReference type="InterPro" id="IPR049428">
    <property type="entry name" value="RecA-like_N"/>
</dbReference>
<dbReference type="InterPro" id="IPR020588">
    <property type="entry name" value="RecA_ATP-bd"/>
</dbReference>
<dbReference type="InterPro" id="IPR023400">
    <property type="entry name" value="RecA_C_sf"/>
</dbReference>
<dbReference type="InterPro" id="IPR020587">
    <property type="entry name" value="RecA_monomer-monomer_interface"/>
</dbReference>
<dbReference type="NCBIfam" id="TIGR02012">
    <property type="entry name" value="tigrfam_recA"/>
    <property type="match status" value="1"/>
</dbReference>
<dbReference type="PANTHER" id="PTHR45900:SF1">
    <property type="entry name" value="MITOCHONDRIAL DNA REPAIR PROTEIN RECA HOMOLOG-RELATED"/>
    <property type="match status" value="1"/>
</dbReference>
<dbReference type="PANTHER" id="PTHR45900">
    <property type="entry name" value="RECA"/>
    <property type="match status" value="1"/>
</dbReference>
<dbReference type="Pfam" id="PF00154">
    <property type="entry name" value="RecA"/>
    <property type="match status" value="1"/>
</dbReference>
<dbReference type="Pfam" id="PF21096">
    <property type="entry name" value="RecA_C"/>
    <property type="match status" value="1"/>
</dbReference>
<dbReference type="PRINTS" id="PR00142">
    <property type="entry name" value="RECA"/>
</dbReference>
<dbReference type="SMART" id="SM00382">
    <property type="entry name" value="AAA"/>
    <property type="match status" value="1"/>
</dbReference>
<dbReference type="SUPFAM" id="SSF52540">
    <property type="entry name" value="P-loop containing nucleoside triphosphate hydrolases"/>
    <property type="match status" value="1"/>
</dbReference>
<dbReference type="SUPFAM" id="SSF54752">
    <property type="entry name" value="RecA protein, C-terminal domain"/>
    <property type="match status" value="1"/>
</dbReference>
<dbReference type="PROSITE" id="PS00321">
    <property type="entry name" value="RECA_1"/>
    <property type="match status" value="1"/>
</dbReference>
<dbReference type="PROSITE" id="PS50162">
    <property type="entry name" value="RECA_2"/>
    <property type="match status" value="1"/>
</dbReference>
<dbReference type="PROSITE" id="PS50163">
    <property type="entry name" value="RECA_3"/>
    <property type="match status" value="1"/>
</dbReference>
<proteinExistence type="inferred from homology"/>
<gene>
    <name evidence="1" type="primary">recA</name>
    <name type="ordered locus">TT_C1466</name>
</gene>
<comment type="function">
    <text evidence="1">Can catalyze the hydrolysis of ATP in the presence of single-stranded DNA, the ATP-dependent uptake of single-stranded DNA by duplex DNA, and the ATP-dependent hybridization of homologous single-stranded DNAs. It interacts with LexA causing its activation and leading to its autocatalytic cleavage.</text>
</comment>
<comment type="subcellular location">
    <subcellularLocation>
        <location evidence="1">Cytoplasm</location>
    </subcellularLocation>
</comment>
<comment type="similarity">
    <text evidence="1">Belongs to the RecA family.</text>
</comment>
<reference key="1">
    <citation type="submission" date="2000-12" db="EMBL/GenBank/DDBJ databases">
        <title>Analysis of the Thermus thermophilus HB27 RecA.</title>
        <authorList>
            <person name="Casares L."/>
            <person name="Castan P."/>
            <person name="Barbe J."/>
            <person name="Berenguer J."/>
        </authorList>
    </citation>
    <scope>NUCLEOTIDE SEQUENCE [GENOMIC DNA]</scope>
</reference>
<reference key="2">
    <citation type="journal article" date="2004" name="Nat. Biotechnol.">
        <title>The genome sequence of the extreme thermophile Thermus thermophilus.</title>
        <authorList>
            <person name="Henne A."/>
            <person name="Brueggemann H."/>
            <person name="Raasch C."/>
            <person name="Wiezer A."/>
            <person name="Hartsch T."/>
            <person name="Liesegang H."/>
            <person name="Johann A."/>
            <person name="Lienard T."/>
            <person name="Gohl O."/>
            <person name="Martinez-Arias R."/>
            <person name="Jacobi C."/>
            <person name="Starkuviene V."/>
            <person name="Schlenczeck S."/>
            <person name="Dencker S."/>
            <person name="Huber R."/>
            <person name="Klenk H.-P."/>
            <person name="Kramer W."/>
            <person name="Merkl R."/>
            <person name="Gottschalk G."/>
            <person name="Fritz H.-J."/>
        </authorList>
    </citation>
    <scope>NUCLEOTIDE SEQUENCE [LARGE SCALE GENOMIC DNA]</scope>
    <source>
        <strain>ATCC BAA-163 / DSM 7039 / HB27</strain>
    </source>
</reference>
<feature type="chain" id="PRO_0000122880" description="Protein RecA">
    <location>
        <begin position="1"/>
        <end position="340"/>
    </location>
</feature>
<feature type="binding site" evidence="1">
    <location>
        <begin position="65"/>
        <end position="72"/>
    </location>
    <ligand>
        <name>ATP</name>
        <dbReference type="ChEBI" id="CHEBI:30616"/>
    </ligand>
</feature>
<feature type="sequence conflict" description="In Ref. 1; AAK15321." evidence="2" ref="1">
    <original>A</original>
    <variation>G</variation>
    <location>
        <position position="75"/>
    </location>
</feature>
<feature type="sequence conflict" description="In Ref. 1; AAK15321." evidence="2" ref="1">
    <original>G</original>
    <variation>A</variation>
    <location>
        <position position="239"/>
    </location>
</feature>
<protein>
    <recommendedName>
        <fullName evidence="1">Protein RecA</fullName>
    </recommendedName>
    <alternativeName>
        <fullName evidence="1">Recombinase A</fullName>
    </alternativeName>
</protein>
<organism>
    <name type="scientific">Thermus thermophilus (strain ATCC BAA-163 / DSM 7039 / HB27)</name>
    <dbReference type="NCBI Taxonomy" id="262724"/>
    <lineage>
        <taxon>Bacteria</taxon>
        <taxon>Thermotogati</taxon>
        <taxon>Deinococcota</taxon>
        <taxon>Deinococci</taxon>
        <taxon>Thermales</taxon>
        <taxon>Thermaceae</taxon>
        <taxon>Thermus</taxon>
    </lineage>
</organism>
<evidence type="ECO:0000255" key="1">
    <source>
        <dbReference type="HAMAP-Rule" id="MF_00268"/>
    </source>
</evidence>
<evidence type="ECO:0000305" key="2"/>
<name>RECA_THET2</name>
<keyword id="KW-0067">ATP-binding</keyword>
<keyword id="KW-0963">Cytoplasm</keyword>
<keyword id="KW-0227">DNA damage</keyword>
<keyword id="KW-0233">DNA recombination</keyword>
<keyword id="KW-0234">DNA repair</keyword>
<keyword id="KW-0238">DNA-binding</keyword>
<keyword id="KW-0547">Nucleotide-binding</keyword>
<keyword id="KW-0742">SOS response</keyword>